<reference key="1">
    <citation type="journal article" date="2008" name="Genome Res.">
        <title>Genome sequence of the beta-rhizobium Cupriavidus taiwanensis and comparative genomics of rhizobia.</title>
        <authorList>
            <person name="Amadou C."/>
            <person name="Pascal G."/>
            <person name="Mangenot S."/>
            <person name="Glew M."/>
            <person name="Bontemps C."/>
            <person name="Capela D."/>
            <person name="Carrere S."/>
            <person name="Cruveiller S."/>
            <person name="Dossat C."/>
            <person name="Lajus A."/>
            <person name="Marchetti M."/>
            <person name="Poinsot V."/>
            <person name="Rouy Z."/>
            <person name="Servin B."/>
            <person name="Saad M."/>
            <person name="Schenowitz C."/>
            <person name="Barbe V."/>
            <person name="Batut J."/>
            <person name="Medigue C."/>
            <person name="Masson-Boivin C."/>
        </authorList>
    </citation>
    <scope>NUCLEOTIDE SEQUENCE [LARGE SCALE GENOMIC DNA]</scope>
    <source>
        <strain>DSM 17343 / BCRC 17206 / CCUG 44338 / CIP 107171 / LMG 19424 / R1</strain>
    </source>
</reference>
<protein>
    <recommendedName>
        <fullName evidence="1">4-hydroxy-2-oxovalerate aldolase</fullName>
        <shortName evidence="1">HOA</shortName>
        <ecNumber evidence="1">4.1.3.39</ecNumber>
    </recommendedName>
    <alternativeName>
        <fullName evidence="1">4-hydroxy-2-keto-pentanoic acid aldolase</fullName>
    </alternativeName>
    <alternativeName>
        <fullName evidence="1">4-hydroxy-2-oxopentanoate aldolase</fullName>
    </alternativeName>
</protein>
<keyword id="KW-0058">Aromatic hydrocarbons catabolism</keyword>
<keyword id="KW-0456">Lyase</keyword>
<keyword id="KW-0464">Manganese</keyword>
<keyword id="KW-0479">Metal-binding</keyword>
<accession>B2AIJ5</accession>
<organism>
    <name type="scientific">Cupriavidus taiwanensis (strain DSM 17343 / BCRC 17206 / CCUG 44338 / CIP 107171 / LMG 19424 / R1)</name>
    <name type="common">Ralstonia taiwanensis (strain LMG 19424)</name>
    <dbReference type="NCBI Taxonomy" id="977880"/>
    <lineage>
        <taxon>Bacteria</taxon>
        <taxon>Pseudomonadati</taxon>
        <taxon>Pseudomonadota</taxon>
        <taxon>Betaproteobacteria</taxon>
        <taxon>Burkholderiales</taxon>
        <taxon>Burkholderiaceae</taxon>
        <taxon>Cupriavidus</taxon>
    </lineage>
</organism>
<proteinExistence type="inferred from homology"/>
<comment type="catalytic activity">
    <reaction evidence="1">
        <text>(S)-4-hydroxy-2-oxopentanoate = acetaldehyde + pyruvate</text>
        <dbReference type="Rhea" id="RHEA:22624"/>
        <dbReference type="ChEBI" id="CHEBI:15343"/>
        <dbReference type="ChEBI" id="CHEBI:15361"/>
        <dbReference type="ChEBI" id="CHEBI:73143"/>
        <dbReference type="EC" id="4.1.3.39"/>
    </reaction>
</comment>
<comment type="similarity">
    <text evidence="1">Belongs to the 4-hydroxy-2-oxovalerate aldolase family.</text>
</comment>
<gene>
    <name type="primary">mhpE</name>
    <name type="ordered locus">RALTA_B0399</name>
</gene>
<name>HOA_CUPTR</name>
<evidence type="ECO:0000255" key="1">
    <source>
        <dbReference type="HAMAP-Rule" id="MF_01656"/>
    </source>
</evidence>
<feature type="chain" id="PRO_0000387817" description="4-hydroxy-2-oxovalerate aldolase">
    <location>
        <begin position="1"/>
        <end position="341"/>
    </location>
</feature>
<feature type="domain" description="Pyruvate carboxyltransferase" evidence="1">
    <location>
        <begin position="5"/>
        <end position="257"/>
    </location>
</feature>
<feature type="active site" description="Proton acceptor" evidence="1">
    <location>
        <position position="17"/>
    </location>
</feature>
<feature type="binding site" evidence="1">
    <location>
        <begin position="13"/>
        <end position="14"/>
    </location>
    <ligand>
        <name>substrate</name>
    </ligand>
</feature>
<feature type="binding site" evidence="1">
    <location>
        <position position="14"/>
    </location>
    <ligand>
        <name>Mn(2+)</name>
        <dbReference type="ChEBI" id="CHEBI:29035"/>
    </ligand>
</feature>
<feature type="binding site" evidence="1">
    <location>
        <position position="167"/>
    </location>
    <ligand>
        <name>substrate</name>
    </ligand>
</feature>
<feature type="binding site" evidence="1">
    <location>
        <position position="196"/>
    </location>
    <ligand>
        <name>Mn(2+)</name>
        <dbReference type="ChEBI" id="CHEBI:29035"/>
    </ligand>
</feature>
<feature type="binding site" evidence="1">
    <location>
        <position position="196"/>
    </location>
    <ligand>
        <name>substrate</name>
    </ligand>
</feature>
<feature type="binding site" evidence="1">
    <location>
        <position position="198"/>
    </location>
    <ligand>
        <name>Mn(2+)</name>
        <dbReference type="ChEBI" id="CHEBI:29035"/>
    </ligand>
</feature>
<feature type="binding site" evidence="1">
    <location>
        <position position="287"/>
    </location>
    <ligand>
        <name>substrate</name>
    </ligand>
</feature>
<feature type="site" description="Transition state stabilizer" evidence="1">
    <location>
        <position position="13"/>
    </location>
</feature>
<sequence length="341" mass="36628">MAQRITLHDMTLRDGMHPKRHQISLEQMKGIARGLDAAGVPLIEVTHGDGLGGASVNYGFPAHSDEEYLRAVLGELKQARVSALLLPGIGTVDHLRMAHEIGVQTIRVATHCTEADVSEQHIGMARKLGMDTVGFLMMAHMAPVQTLVQQALLMESYGANCLYITDSAGHMLPHDVTEKLTAVRQALRPETELGFHGHHNLAMGVANSLAAITCGATRIDAAAAGLGAGAGNTPMEVLVAVCERMGIETGVDVFRIADVAEDLVVPIMDHPIRIDRDALTLGYAGVYSSFLLFAKRAEAKYRIPAREILVELGRQRLVGGQEDMIEDTAITLARARGLPVA</sequence>
<dbReference type="EC" id="4.1.3.39" evidence="1"/>
<dbReference type="EMBL" id="CU633750">
    <property type="protein sequence ID" value="CAP63594.1"/>
    <property type="molecule type" value="Genomic_DNA"/>
</dbReference>
<dbReference type="RefSeq" id="WP_012355248.1">
    <property type="nucleotide sequence ID" value="NC_010530.1"/>
</dbReference>
<dbReference type="SMR" id="B2AIJ5"/>
<dbReference type="GeneID" id="29764456"/>
<dbReference type="KEGG" id="cti:RALTA_B0399"/>
<dbReference type="eggNOG" id="COG0119">
    <property type="taxonomic scope" value="Bacteria"/>
</dbReference>
<dbReference type="HOGENOM" id="CLU_049173_0_0_4"/>
<dbReference type="BioCyc" id="CTAI977880:RALTA_RS17690-MONOMER"/>
<dbReference type="Proteomes" id="UP000001692">
    <property type="component" value="Chromosome 2"/>
</dbReference>
<dbReference type="GO" id="GO:0003852">
    <property type="term" value="F:2-isopropylmalate synthase activity"/>
    <property type="evidence" value="ECO:0007669"/>
    <property type="project" value="TreeGrafter"/>
</dbReference>
<dbReference type="GO" id="GO:0008701">
    <property type="term" value="F:4-hydroxy-2-oxovalerate aldolase activity"/>
    <property type="evidence" value="ECO:0007669"/>
    <property type="project" value="UniProtKB-UniRule"/>
</dbReference>
<dbReference type="GO" id="GO:0030145">
    <property type="term" value="F:manganese ion binding"/>
    <property type="evidence" value="ECO:0007669"/>
    <property type="project" value="UniProtKB-UniRule"/>
</dbReference>
<dbReference type="GO" id="GO:0009056">
    <property type="term" value="P:catabolic process"/>
    <property type="evidence" value="ECO:0007669"/>
    <property type="project" value="UniProtKB-KW"/>
</dbReference>
<dbReference type="GO" id="GO:0009098">
    <property type="term" value="P:L-leucine biosynthetic process"/>
    <property type="evidence" value="ECO:0007669"/>
    <property type="project" value="TreeGrafter"/>
</dbReference>
<dbReference type="CDD" id="cd07943">
    <property type="entry name" value="DRE_TIM_HOA"/>
    <property type="match status" value="1"/>
</dbReference>
<dbReference type="Gene3D" id="1.10.8.60">
    <property type="match status" value="1"/>
</dbReference>
<dbReference type="Gene3D" id="3.20.20.70">
    <property type="entry name" value="Aldolase class I"/>
    <property type="match status" value="1"/>
</dbReference>
<dbReference type="HAMAP" id="MF_01656">
    <property type="entry name" value="HOA"/>
    <property type="match status" value="1"/>
</dbReference>
<dbReference type="InterPro" id="IPR050073">
    <property type="entry name" value="2-IPM_HCS-like"/>
</dbReference>
<dbReference type="InterPro" id="IPR017629">
    <property type="entry name" value="4OH_2_O-val_aldolase"/>
</dbReference>
<dbReference type="InterPro" id="IPR013785">
    <property type="entry name" value="Aldolase_TIM"/>
</dbReference>
<dbReference type="InterPro" id="IPR012425">
    <property type="entry name" value="DmpG_comm"/>
</dbReference>
<dbReference type="InterPro" id="IPR035685">
    <property type="entry name" value="DRE_TIM_HOA"/>
</dbReference>
<dbReference type="InterPro" id="IPR000891">
    <property type="entry name" value="PYR_CT"/>
</dbReference>
<dbReference type="NCBIfam" id="TIGR03217">
    <property type="entry name" value="4OH_2_O_val_ald"/>
    <property type="match status" value="1"/>
</dbReference>
<dbReference type="NCBIfam" id="NF006049">
    <property type="entry name" value="PRK08195.1"/>
    <property type="match status" value="1"/>
</dbReference>
<dbReference type="PANTHER" id="PTHR10277:SF9">
    <property type="entry name" value="2-ISOPROPYLMALATE SYNTHASE 1, CHLOROPLASTIC-RELATED"/>
    <property type="match status" value="1"/>
</dbReference>
<dbReference type="PANTHER" id="PTHR10277">
    <property type="entry name" value="HOMOCITRATE SYNTHASE-RELATED"/>
    <property type="match status" value="1"/>
</dbReference>
<dbReference type="Pfam" id="PF07836">
    <property type="entry name" value="DmpG_comm"/>
    <property type="match status" value="1"/>
</dbReference>
<dbReference type="Pfam" id="PF00682">
    <property type="entry name" value="HMGL-like"/>
    <property type="match status" value="1"/>
</dbReference>
<dbReference type="SUPFAM" id="SSF51569">
    <property type="entry name" value="Aldolase"/>
    <property type="match status" value="1"/>
</dbReference>
<dbReference type="SUPFAM" id="SSF89000">
    <property type="entry name" value="post-HMGL domain-like"/>
    <property type="match status" value="1"/>
</dbReference>
<dbReference type="PROSITE" id="PS50991">
    <property type="entry name" value="PYR_CT"/>
    <property type="match status" value="1"/>
</dbReference>